<organism>
    <name type="scientific">Rickettsia typhi (strain ATCC VR-144 / Wilmington)</name>
    <dbReference type="NCBI Taxonomy" id="257363"/>
    <lineage>
        <taxon>Bacteria</taxon>
        <taxon>Pseudomonadati</taxon>
        <taxon>Pseudomonadota</taxon>
        <taxon>Alphaproteobacteria</taxon>
        <taxon>Rickettsiales</taxon>
        <taxon>Rickettsiaceae</taxon>
        <taxon>Rickettsieae</taxon>
        <taxon>Rickettsia</taxon>
        <taxon>typhus group</taxon>
    </lineage>
</organism>
<protein>
    <recommendedName>
        <fullName>Uncharacterized lipoprotein RT0399</fullName>
    </recommendedName>
</protein>
<evidence type="ECO:0000255" key="1"/>
<evidence type="ECO:0000255" key="2">
    <source>
        <dbReference type="PROSITE-ProRule" id="PRU00303"/>
    </source>
</evidence>
<feature type="signal peptide" evidence="2">
    <location>
        <begin position="1"/>
        <end position="17"/>
    </location>
</feature>
<feature type="chain" id="PRO_0000280789" description="Uncharacterized lipoprotein RT0399">
    <location>
        <begin position="18"/>
        <end position="218"/>
    </location>
</feature>
<feature type="coiled-coil region" evidence="1">
    <location>
        <begin position="136"/>
        <end position="164"/>
    </location>
</feature>
<feature type="lipid moiety-binding region" description="N-palmitoyl cysteine" evidence="2">
    <location>
        <position position="18"/>
    </location>
</feature>
<feature type="lipid moiety-binding region" description="S-diacylglycerol cysteine" evidence="2">
    <location>
        <position position="18"/>
    </location>
</feature>
<name>Y399_RICTY</name>
<gene>
    <name type="ordered locus">RT0399</name>
</gene>
<proteinExistence type="inferred from homology"/>
<dbReference type="EMBL" id="AE017197">
    <property type="protein sequence ID" value="AAU03876.1"/>
    <property type="molecule type" value="Genomic_DNA"/>
</dbReference>
<dbReference type="RefSeq" id="WP_011190860.1">
    <property type="nucleotide sequence ID" value="NC_006142.1"/>
</dbReference>
<dbReference type="SMR" id="Q68WW6"/>
<dbReference type="KEGG" id="rty:RT0399"/>
<dbReference type="HOGENOM" id="CLU_1276797_0_0_5"/>
<dbReference type="OrthoDB" id="7161167at2"/>
<dbReference type="Proteomes" id="UP000000604">
    <property type="component" value="Chromosome"/>
</dbReference>
<dbReference type="GO" id="GO:0005886">
    <property type="term" value="C:plasma membrane"/>
    <property type="evidence" value="ECO:0007669"/>
    <property type="project" value="UniProtKB-SubCell"/>
</dbReference>
<dbReference type="PROSITE" id="PS51257">
    <property type="entry name" value="PROKAR_LIPOPROTEIN"/>
    <property type="match status" value="1"/>
</dbReference>
<keyword id="KW-1003">Cell membrane</keyword>
<keyword id="KW-0175">Coiled coil</keyword>
<keyword id="KW-0449">Lipoprotein</keyword>
<keyword id="KW-0472">Membrane</keyword>
<keyword id="KW-0564">Palmitate</keyword>
<keyword id="KW-0732">Signal</keyword>
<reference key="1">
    <citation type="journal article" date="2004" name="J. Bacteriol.">
        <title>Complete genome sequence of Rickettsia typhi and comparison with sequences of other Rickettsiae.</title>
        <authorList>
            <person name="McLeod M.P."/>
            <person name="Qin X."/>
            <person name="Karpathy S.E."/>
            <person name="Gioia J."/>
            <person name="Highlander S.K."/>
            <person name="Fox G.E."/>
            <person name="McNeill T.Z."/>
            <person name="Jiang H."/>
            <person name="Muzny D."/>
            <person name="Jacob L.S."/>
            <person name="Hawes A.C."/>
            <person name="Sodergren E."/>
            <person name="Gill R."/>
            <person name="Hume J."/>
            <person name="Morgan M."/>
            <person name="Fan G."/>
            <person name="Amin A.G."/>
            <person name="Gibbs R.A."/>
            <person name="Hong C."/>
            <person name="Yu X.-J."/>
            <person name="Walker D.H."/>
            <person name="Weinstock G.M."/>
        </authorList>
    </citation>
    <scope>NUCLEOTIDE SEQUENCE [LARGE SCALE GENOMIC DNA]</scope>
    <source>
        <strain>ATCC VR-144 / Wilmington</strain>
    </source>
</reference>
<comment type="subcellular location">
    <subcellularLocation>
        <location evidence="2">Cell membrane</location>
        <topology evidence="2">Lipid-anchor</topology>
    </subcellularLocation>
</comment>
<accession>Q68WW6</accession>
<sequence length="218" mass="25288">MLKKIIILFLGIFLLSSCTDNFRNYFQRSANNKLFDVKGAKGGKRKPVYNNKYIALAKKNIVEDNIDYDNDVDDNYDNDGPLISEKIDNVKRNREMYLNMIKSDIARQKAEFSATQSNNVMTLSKANKKVRKDDSYKEKKIEEELNQIKAMLKETKRDITKYTCPNATVNQNYVPPVTNYEHVNYPPIKNSNPYNNTSKVKQKFIREDDDDTNNACSI</sequence>